<proteinExistence type="evidence at protein level"/>
<accession>P0A1M6</accession>
<accession>P40706</accession>
<accession>Q8VSG7</accession>
<accession>Q9AFR9</accession>
<accession>Q9AJW0</accession>
<geneLocation type="plasmid">
    <name>pWR100</name>
</geneLocation>
<geneLocation type="plasmid">
    <name>pWR501</name>
</geneLocation>
<geneLocation type="plasmid">
    <name>pMYSH6000</name>
</geneLocation>
<geneLocation type="plasmid">
    <name>pINV_F6_M1382</name>
</geneLocation>
<geneLocation type="plasmid">
    <name>pCP301</name>
</geneLocation>
<dbReference type="EMBL" id="D13663">
    <property type="protein sequence ID" value="BAA02831.1"/>
    <property type="molecule type" value="Genomic_DNA"/>
</dbReference>
<dbReference type="EMBL" id="AL391753">
    <property type="protein sequence ID" value="CAC05830.1"/>
    <property type="molecule type" value="Genomic_DNA"/>
</dbReference>
<dbReference type="EMBL" id="AF348706">
    <property type="protein sequence ID" value="AAK18474.1"/>
    <property type="status" value="ALT_INIT"/>
    <property type="molecule type" value="Genomic_DNA"/>
</dbReference>
<dbReference type="EMBL" id="AY206439">
    <property type="protein sequence ID" value="AAP79018.1"/>
    <property type="molecule type" value="Genomic_DNA"/>
</dbReference>
<dbReference type="EMBL" id="AF386526">
    <property type="protein sequence ID" value="AAL72306.2"/>
    <property type="molecule type" value="Genomic_DNA"/>
</dbReference>
<dbReference type="PIR" id="I49846">
    <property type="entry name" value="I49846"/>
</dbReference>
<dbReference type="RefSeq" id="NP_085318.1">
    <property type="nucleotide sequence ID" value="NC_002698.1"/>
</dbReference>
<dbReference type="RefSeq" id="NP_858288.2">
    <property type="nucleotide sequence ID" value="NC_004851.1"/>
</dbReference>
<dbReference type="RefSeq" id="WP_031942476.1">
    <property type="nucleotide sequence ID" value="NZ_QWST01000007.1"/>
</dbReference>
<dbReference type="RefSeq" id="YP_009062512.1">
    <property type="nucleotide sequence ID" value="NC_024996.1"/>
</dbReference>
<dbReference type="PDB" id="6R6B">
    <property type="method" value="EM"/>
    <property type="resolution" value="3.50 A"/>
    <property type="chains" value="F=1-256"/>
</dbReference>
<dbReference type="PDB" id="6RWY">
    <property type="method" value="EM"/>
    <property type="resolution" value="5.11 A"/>
    <property type="chains" value="f=1-256"/>
</dbReference>
<dbReference type="PDB" id="8AXK">
    <property type="method" value="EM"/>
    <property type="resolution" value="4.05 A"/>
    <property type="chains" value="F=1-256"/>
</dbReference>
<dbReference type="PDBsum" id="6R6B"/>
<dbReference type="PDBsum" id="6RWY"/>
<dbReference type="PDBsum" id="8AXK"/>
<dbReference type="EMDB" id="EMD-15700"/>
<dbReference type="EMDB" id="EMD-4734"/>
<dbReference type="SMR" id="P0A1M6"/>
<dbReference type="TCDB" id="3.A.6.1.2">
    <property type="family name" value="the type iii (virulence-related) secretory pathway (iiisp) family"/>
</dbReference>
<dbReference type="PaxDb" id="198214-CP0155"/>
<dbReference type="GeneID" id="1238002"/>
<dbReference type="KEGG" id="sfl:CP0155"/>
<dbReference type="PATRIC" id="fig|198214.7.peg.5400"/>
<dbReference type="HOGENOM" id="CLU_063626_0_3_6"/>
<dbReference type="Proteomes" id="UP000001006">
    <property type="component" value="Plasmid pCP301"/>
</dbReference>
<dbReference type="GO" id="GO:0005886">
    <property type="term" value="C:plasma membrane"/>
    <property type="evidence" value="ECO:0007669"/>
    <property type="project" value="UniProtKB-SubCell"/>
</dbReference>
<dbReference type="GO" id="GO:0006605">
    <property type="term" value="P:protein targeting"/>
    <property type="evidence" value="ECO:0007669"/>
    <property type="project" value="InterPro"/>
</dbReference>
<dbReference type="InterPro" id="IPR002010">
    <property type="entry name" value="T3SS_IM_R"/>
</dbReference>
<dbReference type="InterPro" id="IPR006304">
    <property type="entry name" value="T3SS_SpaR/YscT"/>
</dbReference>
<dbReference type="NCBIfam" id="TIGR01401">
    <property type="entry name" value="fliR_like_III"/>
    <property type="match status" value="1"/>
</dbReference>
<dbReference type="PANTHER" id="PTHR30065">
    <property type="entry name" value="FLAGELLAR BIOSYNTHETIC PROTEIN FLIR"/>
    <property type="match status" value="1"/>
</dbReference>
<dbReference type="PANTHER" id="PTHR30065:SF1">
    <property type="entry name" value="SURFACE PRESENTATION OF ANTIGENS PROTEIN SPAR"/>
    <property type="match status" value="1"/>
</dbReference>
<dbReference type="Pfam" id="PF01311">
    <property type="entry name" value="Bac_export_1"/>
    <property type="match status" value="1"/>
</dbReference>
<dbReference type="PRINTS" id="PR00953">
    <property type="entry name" value="TYPE3IMRPROT"/>
</dbReference>
<gene>
    <name type="primary">spaR</name>
    <name type="synonym">spa29</name>
    <name type="ordered locus">CP0155</name>
</gene>
<sequence>MDISSWFESIHVFLILLNGVFFRLAPLFFFLPFLNNGIISPSIRIPVIFLVASGLITSGKVDIGSSVFEHVYFLMFKEIIVGLLLSFCLSLPFWIFHAVGSIIDNQRGATLSSSIDPANGVDTSELAKFFNLFSAVVFLYSGGMVFILESIQLSYNICPLFSQCSFRISNILTFLTLLASQAVILASPVMIVLLLSEVLLGVLSRFAPQMNAFSVSLTIKSLLAIFIIFICSSTIYFSKVQFFLGEHKFFTNLFVR</sequence>
<protein>
    <recommendedName>
        <fullName>Surface presentation of antigens protein SpaR</fullName>
    </recommendedName>
    <alternativeName>
        <fullName>Spa29 protein</fullName>
    </alternativeName>
</protein>
<organism>
    <name type="scientific">Shigella flexneri</name>
    <dbReference type="NCBI Taxonomy" id="623"/>
    <lineage>
        <taxon>Bacteria</taxon>
        <taxon>Pseudomonadati</taxon>
        <taxon>Pseudomonadota</taxon>
        <taxon>Gammaproteobacteria</taxon>
        <taxon>Enterobacterales</taxon>
        <taxon>Enterobacteriaceae</taxon>
        <taxon>Shigella</taxon>
    </lineage>
</organism>
<feature type="chain" id="PRO_0000192060" description="Surface presentation of antigens protein SpaR">
    <location>
        <begin position="1"/>
        <end position="256"/>
    </location>
</feature>
<feature type="transmembrane region" description="Helical" evidence="1">
    <location>
        <begin position="13"/>
        <end position="33"/>
    </location>
</feature>
<feature type="transmembrane region" description="Helical" evidence="1">
    <location>
        <begin position="37"/>
        <end position="57"/>
    </location>
</feature>
<feature type="transmembrane region" description="Helical" evidence="1">
    <location>
        <begin position="79"/>
        <end position="99"/>
    </location>
</feature>
<feature type="transmembrane region" description="Helical" evidence="1">
    <location>
        <begin position="129"/>
        <end position="149"/>
    </location>
</feature>
<feature type="transmembrane region" description="Helical" evidence="1">
    <location>
        <begin position="183"/>
        <end position="203"/>
    </location>
</feature>
<feature type="transmembrane region" description="Helical" evidence="1">
    <location>
        <begin position="217"/>
        <end position="237"/>
    </location>
</feature>
<feature type="sequence variant" description="In plasmid pMYSH6000, plasmid pCP301 and plasmid pINV_F6_M1382.">
    <original>I</original>
    <variation>V</variation>
    <location>
        <position position="168"/>
    </location>
</feature>
<feature type="helix" evidence="3">
    <location>
        <begin position="12"/>
        <end position="28"/>
    </location>
</feature>
<feature type="helix" evidence="3">
    <location>
        <begin position="41"/>
        <end position="55"/>
    </location>
</feature>
<feature type="turn" evidence="3">
    <location>
        <begin position="56"/>
        <end position="59"/>
    </location>
</feature>
<feature type="helix" evidence="3">
    <location>
        <begin position="73"/>
        <end position="89"/>
    </location>
</feature>
<feature type="helix" evidence="3">
    <location>
        <begin position="91"/>
        <end position="107"/>
    </location>
</feature>
<feature type="turn" evidence="3">
    <location>
        <begin position="113"/>
        <end position="115"/>
    </location>
</feature>
<feature type="helix" evidence="3">
    <location>
        <begin position="127"/>
        <end position="140"/>
    </location>
</feature>
<feature type="helix" evidence="3">
    <location>
        <begin position="143"/>
        <end position="157"/>
    </location>
</feature>
<feature type="strand" evidence="3">
    <location>
        <begin position="160"/>
        <end position="162"/>
    </location>
</feature>
<feature type="strand" evidence="3">
    <location>
        <begin position="171"/>
        <end position="173"/>
    </location>
</feature>
<feature type="helix" evidence="3">
    <location>
        <begin position="174"/>
        <end position="205"/>
    </location>
</feature>
<feature type="helix" evidence="3">
    <location>
        <begin position="212"/>
        <end position="229"/>
    </location>
</feature>
<feature type="turn" evidence="3">
    <location>
        <begin position="234"/>
        <end position="237"/>
    </location>
</feature>
<feature type="helix" evidence="3">
    <location>
        <begin position="238"/>
        <end position="248"/>
    </location>
</feature>
<feature type="turn" evidence="3">
    <location>
        <begin position="249"/>
        <end position="253"/>
    </location>
</feature>
<keyword id="KW-0002">3D-structure</keyword>
<keyword id="KW-1003">Cell membrane</keyword>
<keyword id="KW-0472">Membrane</keyword>
<keyword id="KW-0614">Plasmid</keyword>
<keyword id="KW-1185">Reference proteome</keyword>
<keyword id="KW-0812">Transmembrane</keyword>
<keyword id="KW-1133">Transmembrane helix</keyword>
<keyword id="KW-0843">Virulence</keyword>
<evidence type="ECO:0000255" key="1"/>
<evidence type="ECO:0000305" key="2"/>
<evidence type="ECO:0007829" key="3">
    <source>
        <dbReference type="PDB" id="6R6B"/>
    </source>
</evidence>
<name>SPAR_SHIFL</name>
<reference key="1">
    <citation type="journal article" date="1993" name="J. Bacteriol.">
        <title>Eight genes in region 5 that form an operon are essential for invasion of epithelial cells by Shigella flexneri 2a.</title>
        <authorList>
            <person name="Sasakawa C."/>
            <person name="Komatsu K."/>
            <person name="Tobe T."/>
            <person name="Suzuki T."/>
            <person name="Yoshikawa M."/>
        </authorList>
    </citation>
    <scope>NUCLEOTIDE SEQUENCE [GENOMIC DNA]</scope>
    <source>
        <strain>YSH6000 / Serotype 2a</strain>
        <plasmid>pMYSH6000</plasmid>
    </source>
</reference>
<reference key="2">
    <citation type="journal article" date="2000" name="Mol. Microbiol.">
        <title>The virulence plasmid pWR100 and the repertoire of proteins secreted by the type III secretion apparatus of Shigella flexneri.</title>
        <authorList>
            <person name="Buchrieser C."/>
            <person name="Glaser P."/>
            <person name="Rusniok C."/>
            <person name="Nedjari H."/>
            <person name="d'Hauteville H."/>
            <person name="Kunst F."/>
            <person name="Sansonetti P.J."/>
            <person name="Parsot C."/>
        </authorList>
    </citation>
    <scope>NUCLEOTIDE SEQUENCE [GENOMIC DNA]</scope>
    <source>
        <strain>M90T / Serotype 5a</strain>
        <plasmid>pWR100</plasmid>
    </source>
</reference>
<reference key="3">
    <citation type="journal article" date="2001" name="Infect. Immun.">
        <title>Complete DNA sequence and analysis of the large virulence plasmid of Shigella flexneri.</title>
        <authorList>
            <person name="Venkatesan M.M."/>
            <person name="Goldberg M.B."/>
            <person name="Rose D.J."/>
            <person name="Grotbeck E.J."/>
            <person name="Burland V."/>
            <person name="Blattner F.R."/>
        </authorList>
    </citation>
    <scope>NUCLEOTIDE SEQUENCE [GENOMIC DNA]</scope>
    <source>
        <strain>M90T / Serotype 5a</strain>
        <plasmid>pWR501</plasmid>
    </source>
</reference>
<reference key="4">
    <citation type="journal article" date="2003" name="Infect. Immun.">
        <title>Comparison of two major forms of the Shigella virulence plasmid pINV: positive selection is a major force driving the divergence.</title>
        <authorList>
            <person name="Lan R."/>
            <person name="Stevenson G."/>
            <person name="Reeves P.R."/>
        </authorList>
    </citation>
    <scope>NUCLEOTIDE SEQUENCE [GENOMIC DNA]</scope>
    <source>
        <strain>M1382 / Serotype 6</strain>
        <plasmid>pINV_F6_M1382</plasmid>
    </source>
</reference>
<reference key="5">
    <citation type="journal article" date="2002" name="Nucleic Acids Res.">
        <title>Genome sequence of Shigella flexneri 2a: insights into pathogenicity through comparison with genomes of Escherichia coli K12 and O157.</title>
        <authorList>
            <person name="Jin Q."/>
            <person name="Yuan Z."/>
            <person name="Xu J."/>
            <person name="Wang Y."/>
            <person name="Shen Y."/>
            <person name="Lu W."/>
            <person name="Wang J."/>
            <person name="Liu H."/>
            <person name="Yang J."/>
            <person name="Yang F."/>
            <person name="Zhang X."/>
            <person name="Zhang J."/>
            <person name="Yang G."/>
            <person name="Wu H."/>
            <person name="Qu D."/>
            <person name="Dong J."/>
            <person name="Sun L."/>
            <person name="Xue Y."/>
            <person name="Zhao A."/>
            <person name="Gao Y."/>
            <person name="Zhu J."/>
            <person name="Kan B."/>
            <person name="Ding K."/>
            <person name="Chen S."/>
            <person name="Cheng H."/>
            <person name="Yao Z."/>
            <person name="He B."/>
            <person name="Chen R."/>
            <person name="Ma D."/>
            <person name="Qiang B."/>
            <person name="Wen Y."/>
            <person name="Hou Y."/>
            <person name="Yu J."/>
        </authorList>
    </citation>
    <scope>NUCLEOTIDE SEQUENCE [LARGE SCALE GENOMIC DNA]</scope>
    <source>
        <strain>301 / Serotype 2a</strain>
        <plasmid>pCP301</plasmid>
    </source>
</reference>
<comment type="function">
    <text>Required for surface presentation of invasion plasmid antigens. Could play a role in preserving the translocation competence of the ipa antigens. Required for invasion and for secretion of the three ipa proteins.</text>
</comment>
<comment type="subcellular location">
    <subcellularLocation>
        <location evidence="2">Cell membrane</location>
        <topology evidence="2">Multi-pass membrane protein</topology>
    </subcellularLocation>
</comment>
<comment type="similarity">
    <text evidence="2">Belongs to the FliR/MopE/SpaR family.</text>
</comment>
<comment type="sequence caution" evidence="2">
    <conflict type="erroneous initiation">
        <sequence resource="EMBL-CDS" id="AAK18474"/>
    </conflict>
    <text>Extended N-terminus.</text>
</comment>